<dbReference type="EC" id="6.3.4.2" evidence="1"/>
<dbReference type="EMBL" id="BX897700">
    <property type="protein sequence ID" value="CAF25985.1"/>
    <property type="molecule type" value="Genomic_DNA"/>
</dbReference>
<dbReference type="RefSeq" id="WP_011179271.1">
    <property type="nucleotide sequence ID" value="NC_005955.1"/>
</dbReference>
<dbReference type="SMR" id="Q6G027"/>
<dbReference type="MEROPS" id="C26.964"/>
<dbReference type="KEGG" id="bqu:BQ04860"/>
<dbReference type="eggNOG" id="COG0504">
    <property type="taxonomic scope" value="Bacteria"/>
</dbReference>
<dbReference type="HOGENOM" id="CLU_011675_5_0_5"/>
<dbReference type="OrthoDB" id="9801107at2"/>
<dbReference type="UniPathway" id="UPA00159">
    <property type="reaction ID" value="UER00277"/>
</dbReference>
<dbReference type="Proteomes" id="UP000000597">
    <property type="component" value="Chromosome"/>
</dbReference>
<dbReference type="GO" id="GO:0005829">
    <property type="term" value="C:cytosol"/>
    <property type="evidence" value="ECO:0007669"/>
    <property type="project" value="TreeGrafter"/>
</dbReference>
<dbReference type="GO" id="GO:0005524">
    <property type="term" value="F:ATP binding"/>
    <property type="evidence" value="ECO:0007669"/>
    <property type="project" value="UniProtKB-KW"/>
</dbReference>
<dbReference type="GO" id="GO:0003883">
    <property type="term" value="F:CTP synthase activity"/>
    <property type="evidence" value="ECO:0007669"/>
    <property type="project" value="UniProtKB-UniRule"/>
</dbReference>
<dbReference type="GO" id="GO:0004359">
    <property type="term" value="F:glutaminase activity"/>
    <property type="evidence" value="ECO:0007669"/>
    <property type="project" value="RHEA"/>
</dbReference>
<dbReference type="GO" id="GO:0042802">
    <property type="term" value="F:identical protein binding"/>
    <property type="evidence" value="ECO:0007669"/>
    <property type="project" value="TreeGrafter"/>
</dbReference>
<dbReference type="GO" id="GO:0046872">
    <property type="term" value="F:metal ion binding"/>
    <property type="evidence" value="ECO:0007669"/>
    <property type="project" value="UniProtKB-KW"/>
</dbReference>
<dbReference type="GO" id="GO:0044210">
    <property type="term" value="P:'de novo' CTP biosynthetic process"/>
    <property type="evidence" value="ECO:0007669"/>
    <property type="project" value="UniProtKB-UniRule"/>
</dbReference>
<dbReference type="GO" id="GO:0019856">
    <property type="term" value="P:pyrimidine nucleobase biosynthetic process"/>
    <property type="evidence" value="ECO:0007669"/>
    <property type="project" value="TreeGrafter"/>
</dbReference>
<dbReference type="CDD" id="cd03113">
    <property type="entry name" value="CTPS_N"/>
    <property type="match status" value="1"/>
</dbReference>
<dbReference type="CDD" id="cd01746">
    <property type="entry name" value="GATase1_CTP_Synthase"/>
    <property type="match status" value="1"/>
</dbReference>
<dbReference type="FunFam" id="3.40.50.300:FF:000009">
    <property type="entry name" value="CTP synthase"/>
    <property type="match status" value="1"/>
</dbReference>
<dbReference type="FunFam" id="3.40.50.880:FF:000002">
    <property type="entry name" value="CTP synthase"/>
    <property type="match status" value="1"/>
</dbReference>
<dbReference type="Gene3D" id="3.40.50.880">
    <property type="match status" value="1"/>
</dbReference>
<dbReference type="Gene3D" id="3.40.50.300">
    <property type="entry name" value="P-loop containing nucleotide triphosphate hydrolases"/>
    <property type="match status" value="1"/>
</dbReference>
<dbReference type="HAMAP" id="MF_01227">
    <property type="entry name" value="PyrG"/>
    <property type="match status" value="1"/>
</dbReference>
<dbReference type="InterPro" id="IPR029062">
    <property type="entry name" value="Class_I_gatase-like"/>
</dbReference>
<dbReference type="InterPro" id="IPR004468">
    <property type="entry name" value="CTP_synthase"/>
</dbReference>
<dbReference type="InterPro" id="IPR017456">
    <property type="entry name" value="CTP_synthase_N"/>
</dbReference>
<dbReference type="InterPro" id="IPR017926">
    <property type="entry name" value="GATASE"/>
</dbReference>
<dbReference type="InterPro" id="IPR033828">
    <property type="entry name" value="GATase1_CTP_Synthase"/>
</dbReference>
<dbReference type="InterPro" id="IPR027417">
    <property type="entry name" value="P-loop_NTPase"/>
</dbReference>
<dbReference type="NCBIfam" id="NF003792">
    <property type="entry name" value="PRK05380.1"/>
    <property type="match status" value="1"/>
</dbReference>
<dbReference type="NCBIfam" id="TIGR00337">
    <property type="entry name" value="PyrG"/>
    <property type="match status" value="1"/>
</dbReference>
<dbReference type="PANTHER" id="PTHR11550">
    <property type="entry name" value="CTP SYNTHASE"/>
    <property type="match status" value="1"/>
</dbReference>
<dbReference type="PANTHER" id="PTHR11550:SF0">
    <property type="entry name" value="CTP SYNTHASE-RELATED"/>
    <property type="match status" value="1"/>
</dbReference>
<dbReference type="Pfam" id="PF06418">
    <property type="entry name" value="CTP_synth_N"/>
    <property type="match status" value="1"/>
</dbReference>
<dbReference type="Pfam" id="PF00117">
    <property type="entry name" value="GATase"/>
    <property type="match status" value="1"/>
</dbReference>
<dbReference type="SUPFAM" id="SSF52317">
    <property type="entry name" value="Class I glutamine amidotransferase-like"/>
    <property type="match status" value="1"/>
</dbReference>
<dbReference type="SUPFAM" id="SSF52540">
    <property type="entry name" value="P-loop containing nucleoside triphosphate hydrolases"/>
    <property type="match status" value="1"/>
</dbReference>
<dbReference type="PROSITE" id="PS51273">
    <property type="entry name" value="GATASE_TYPE_1"/>
    <property type="match status" value="1"/>
</dbReference>
<feature type="chain" id="PRO_0000266066" description="CTP synthase">
    <location>
        <begin position="1"/>
        <end position="542"/>
    </location>
</feature>
<feature type="domain" description="Glutamine amidotransferase type-1" evidence="1">
    <location>
        <begin position="291"/>
        <end position="541"/>
    </location>
</feature>
<feature type="region of interest" description="Amidoligase domain" evidence="1">
    <location>
        <begin position="1"/>
        <end position="265"/>
    </location>
</feature>
<feature type="active site" description="Nucleophile; for glutamine hydrolysis" evidence="1">
    <location>
        <position position="380"/>
    </location>
</feature>
<feature type="active site" evidence="1">
    <location>
        <position position="514"/>
    </location>
</feature>
<feature type="active site" evidence="1">
    <location>
        <position position="516"/>
    </location>
</feature>
<feature type="binding site" evidence="1">
    <location>
        <position position="13"/>
    </location>
    <ligand>
        <name>CTP</name>
        <dbReference type="ChEBI" id="CHEBI:37563"/>
        <note>allosteric inhibitor</note>
    </ligand>
</feature>
<feature type="binding site" evidence="1">
    <location>
        <position position="13"/>
    </location>
    <ligand>
        <name>UTP</name>
        <dbReference type="ChEBI" id="CHEBI:46398"/>
    </ligand>
</feature>
<feature type="binding site" evidence="1">
    <location>
        <begin position="14"/>
        <end position="19"/>
    </location>
    <ligand>
        <name>ATP</name>
        <dbReference type="ChEBI" id="CHEBI:30616"/>
    </ligand>
</feature>
<feature type="binding site" evidence="1">
    <location>
        <position position="54"/>
    </location>
    <ligand>
        <name>L-glutamine</name>
        <dbReference type="ChEBI" id="CHEBI:58359"/>
    </ligand>
</feature>
<feature type="binding site" evidence="1">
    <location>
        <position position="71"/>
    </location>
    <ligand>
        <name>ATP</name>
        <dbReference type="ChEBI" id="CHEBI:30616"/>
    </ligand>
</feature>
<feature type="binding site" evidence="1">
    <location>
        <position position="71"/>
    </location>
    <ligand>
        <name>Mg(2+)</name>
        <dbReference type="ChEBI" id="CHEBI:18420"/>
    </ligand>
</feature>
<feature type="binding site" evidence="1">
    <location>
        <position position="139"/>
    </location>
    <ligand>
        <name>Mg(2+)</name>
        <dbReference type="ChEBI" id="CHEBI:18420"/>
    </ligand>
</feature>
<feature type="binding site" evidence="1">
    <location>
        <begin position="146"/>
        <end position="148"/>
    </location>
    <ligand>
        <name>CTP</name>
        <dbReference type="ChEBI" id="CHEBI:37563"/>
        <note>allosteric inhibitor</note>
    </ligand>
</feature>
<feature type="binding site" evidence="1">
    <location>
        <begin position="186"/>
        <end position="191"/>
    </location>
    <ligand>
        <name>CTP</name>
        <dbReference type="ChEBI" id="CHEBI:37563"/>
        <note>allosteric inhibitor</note>
    </ligand>
</feature>
<feature type="binding site" evidence="1">
    <location>
        <begin position="186"/>
        <end position="191"/>
    </location>
    <ligand>
        <name>UTP</name>
        <dbReference type="ChEBI" id="CHEBI:46398"/>
    </ligand>
</feature>
<feature type="binding site" evidence="1">
    <location>
        <position position="222"/>
    </location>
    <ligand>
        <name>CTP</name>
        <dbReference type="ChEBI" id="CHEBI:37563"/>
        <note>allosteric inhibitor</note>
    </ligand>
</feature>
<feature type="binding site" evidence="1">
    <location>
        <position position="222"/>
    </location>
    <ligand>
        <name>UTP</name>
        <dbReference type="ChEBI" id="CHEBI:46398"/>
    </ligand>
</feature>
<feature type="binding site" evidence="1">
    <location>
        <position position="353"/>
    </location>
    <ligand>
        <name>L-glutamine</name>
        <dbReference type="ChEBI" id="CHEBI:58359"/>
    </ligand>
</feature>
<feature type="binding site" evidence="1">
    <location>
        <begin position="381"/>
        <end position="384"/>
    </location>
    <ligand>
        <name>L-glutamine</name>
        <dbReference type="ChEBI" id="CHEBI:58359"/>
    </ligand>
</feature>
<feature type="binding site" evidence="1">
    <location>
        <position position="404"/>
    </location>
    <ligand>
        <name>L-glutamine</name>
        <dbReference type="ChEBI" id="CHEBI:58359"/>
    </ligand>
</feature>
<feature type="binding site" evidence="1">
    <location>
        <position position="469"/>
    </location>
    <ligand>
        <name>L-glutamine</name>
        <dbReference type="ChEBI" id="CHEBI:58359"/>
    </ligand>
</feature>
<name>PYRG_BARQU</name>
<comment type="function">
    <text evidence="1">Catalyzes the ATP-dependent amination of UTP to CTP with either L-glutamine or ammonia as the source of nitrogen. Regulates intracellular CTP levels through interactions with the four ribonucleotide triphosphates.</text>
</comment>
<comment type="catalytic activity">
    <reaction evidence="1">
        <text>UTP + L-glutamine + ATP + H2O = CTP + L-glutamate + ADP + phosphate + 2 H(+)</text>
        <dbReference type="Rhea" id="RHEA:26426"/>
        <dbReference type="ChEBI" id="CHEBI:15377"/>
        <dbReference type="ChEBI" id="CHEBI:15378"/>
        <dbReference type="ChEBI" id="CHEBI:29985"/>
        <dbReference type="ChEBI" id="CHEBI:30616"/>
        <dbReference type="ChEBI" id="CHEBI:37563"/>
        <dbReference type="ChEBI" id="CHEBI:43474"/>
        <dbReference type="ChEBI" id="CHEBI:46398"/>
        <dbReference type="ChEBI" id="CHEBI:58359"/>
        <dbReference type="ChEBI" id="CHEBI:456216"/>
        <dbReference type="EC" id="6.3.4.2"/>
    </reaction>
</comment>
<comment type="catalytic activity">
    <reaction evidence="1">
        <text>L-glutamine + H2O = L-glutamate + NH4(+)</text>
        <dbReference type="Rhea" id="RHEA:15889"/>
        <dbReference type="ChEBI" id="CHEBI:15377"/>
        <dbReference type="ChEBI" id="CHEBI:28938"/>
        <dbReference type="ChEBI" id="CHEBI:29985"/>
        <dbReference type="ChEBI" id="CHEBI:58359"/>
    </reaction>
</comment>
<comment type="catalytic activity">
    <reaction evidence="1">
        <text>UTP + NH4(+) + ATP = CTP + ADP + phosphate + 2 H(+)</text>
        <dbReference type="Rhea" id="RHEA:16597"/>
        <dbReference type="ChEBI" id="CHEBI:15378"/>
        <dbReference type="ChEBI" id="CHEBI:28938"/>
        <dbReference type="ChEBI" id="CHEBI:30616"/>
        <dbReference type="ChEBI" id="CHEBI:37563"/>
        <dbReference type="ChEBI" id="CHEBI:43474"/>
        <dbReference type="ChEBI" id="CHEBI:46398"/>
        <dbReference type="ChEBI" id="CHEBI:456216"/>
    </reaction>
</comment>
<comment type="activity regulation">
    <text evidence="1">Allosterically activated by GTP, when glutamine is the substrate; GTP has no effect on the reaction when ammonia is the substrate. The allosteric effector GTP functions by stabilizing the protein conformation that binds the tetrahedral intermediate(s) formed during glutamine hydrolysis. Inhibited by the product CTP, via allosteric rather than competitive inhibition.</text>
</comment>
<comment type="pathway">
    <text evidence="1">Pyrimidine metabolism; CTP biosynthesis via de novo pathway; CTP from UDP: step 2/2.</text>
</comment>
<comment type="subunit">
    <text evidence="1">Homotetramer.</text>
</comment>
<comment type="miscellaneous">
    <text evidence="1">CTPSs have evolved a hybrid strategy for distinguishing between UTP and CTP. The overlapping regions of the product feedback inhibitory and substrate sites recognize a common feature in both compounds, the triphosphate moiety. To differentiate isosteric substrate and product pyrimidine rings, an additional pocket far from the expected kinase/ligase catalytic site, specifically recognizes the cytosine and ribose portions of the product inhibitor.</text>
</comment>
<comment type="similarity">
    <text evidence="1">Belongs to the CTP synthase family.</text>
</comment>
<evidence type="ECO:0000255" key="1">
    <source>
        <dbReference type="HAMAP-Rule" id="MF_01227"/>
    </source>
</evidence>
<reference key="1">
    <citation type="journal article" date="2004" name="Proc. Natl. Acad. Sci. U.S.A.">
        <title>The louse-borne human pathogen Bartonella quintana is a genomic derivative of the zoonotic agent Bartonella henselae.</title>
        <authorList>
            <person name="Alsmark U.C.M."/>
            <person name="Frank A.C."/>
            <person name="Karlberg E.O."/>
            <person name="Legault B.-A."/>
            <person name="Ardell D.H."/>
            <person name="Canbaeck B."/>
            <person name="Eriksson A.-S."/>
            <person name="Naeslund A.K."/>
            <person name="Handley S.A."/>
            <person name="Huvet M."/>
            <person name="La Scola B."/>
            <person name="Holmberg M."/>
            <person name="Andersson S.G.E."/>
        </authorList>
    </citation>
    <scope>NUCLEOTIDE SEQUENCE [LARGE SCALE GENOMIC DNA]</scope>
    <source>
        <strain>Toulouse</strain>
    </source>
</reference>
<sequence>MARYIFITGGVVSSLGKGIAAATLAALLQARGYRVRLRKLDPYLNVDPGTMSPYQHGEVFVTDDGAETDLDLGHYERFTGHSANSQDNITTGRIYRNIIERERRGDYLGATVQVIPHVTDEIKRFITTGNEEFDFILCEIGGTVGDIEAMPFLEAIRQLHNELPRQSVIYVHLTLMPYISSVGELKTKPTQHSVKELQSIGISPDILLVRADRPIPETERCKLSLFCNVRPSAVIQALNMPTIYDVPMAYHKEGLDSEVLCAFGIDPTPKPKMDRWEDITYRIHHLEGEVTIAVVGKYTGLKDAYKSLIEAIAHGGLANKVKVNIEWIEAELFEKEDPASYLQKVHGILVPGAFGARGAEGKIQAIQFARERKVPFLGICFGMQLACIEVARNIAKIENASSSEFCETKNPIVGLMTEWLKEDVLEKRAKCGNLGGTMRLGAFAAELKEGSHIAKIYGMTRILERHRHRYEVNVDYKDKLEQCGLIFSGMSPDGVLPEAIEYADHPWFIGVQYHPELKSRPFDPHPLFSSFIEATVEQSRLV</sequence>
<accession>Q6G027</accession>
<proteinExistence type="inferred from homology"/>
<protein>
    <recommendedName>
        <fullName evidence="1">CTP synthase</fullName>
        <ecNumber evidence="1">6.3.4.2</ecNumber>
    </recommendedName>
    <alternativeName>
        <fullName evidence="1">Cytidine 5'-triphosphate synthase</fullName>
    </alternativeName>
    <alternativeName>
        <fullName evidence="1">Cytidine triphosphate synthetase</fullName>
        <shortName evidence="1">CTP synthetase</shortName>
        <shortName evidence="1">CTPS</shortName>
    </alternativeName>
    <alternativeName>
        <fullName evidence="1">UTP--ammonia ligase</fullName>
    </alternativeName>
</protein>
<keyword id="KW-0067">ATP-binding</keyword>
<keyword id="KW-0315">Glutamine amidotransferase</keyword>
<keyword id="KW-0436">Ligase</keyword>
<keyword id="KW-0460">Magnesium</keyword>
<keyword id="KW-0479">Metal-binding</keyword>
<keyword id="KW-0547">Nucleotide-binding</keyword>
<keyword id="KW-0665">Pyrimidine biosynthesis</keyword>
<organism>
    <name type="scientific">Bartonella quintana (strain Toulouse)</name>
    <name type="common">Rochalimaea quintana</name>
    <dbReference type="NCBI Taxonomy" id="283165"/>
    <lineage>
        <taxon>Bacteria</taxon>
        <taxon>Pseudomonadati</taxon>
        <taxon>Pseudomonadota</taxon>
        <taxon>Alphaproteobacteria</taxon>
        <taxon>Hyphomicrobiales</taxon>
        <taxon>Bartonellaceae</taxon>
        <taxon>Bartonella</taxon>
    </lineage>
</organism>
<gene>
    <name evidence="1" type="primary">pyrG</name>
    <name type="ordered locus">BQ04860</name>
</gene>